<organism>
    <name type="scientific">Bos taurus</name>
    <name type="common">Bovine</name>
    <dbReference type="NCBI Taxonomy" id="9913"/>
    <lineage>
        <taxon>Eukaryota</taxon>
        <taxon>Metazoa</taxon>
        <taxon>Chordata</taxon>
        <taxon>Craniata</taxon>
        <taxon>Vertebrata</taxon>
        <taxon>Euteleostomi</taxon>
        <taxon>Mammalia</taxon>
        <taxon>Eutheria</taxon>
        <taxon>Laurasiatheria</taxon>
        <taxon>Artiodactyla</taxon>
        <taxon>Ruminantia</taxon>
        <taxon>Pecora</taxon>
        <taxon>Bovidae</taxon>
        <taxon>Bovinae</taxon>
        <taxon>Bos</taxon>
    </lineage>
</organism>
<protein>
    <recommendedName>
        <fullName>Coiled-coil domain-containing protein 102A</fullName>
    </recommendedName>
</protein>
<proteinExistence type="evidence at transcript level"/>
<gene>
    <name type="primary">CCDC102A</name>
</gene>
<evidence type="ECO:0000250" key="1">
    <source>
        <dbReference type="UniProtKB" id="Q96A19"/>
    </source>
</evidence>
<evidence type="ECO:0000255" key="2"/>
<evidence type="ECO:0000256" key="3">
    <source>
        <dbReference type="SAM" id="MobiDB-lite"/>
    </source>
</evidence>
<keyword id="KW-0175">Coiled coil</keyword>
<keyword id="KW-0597">Phosphoprotein</keyword>
<keyword id="KW-1185">Reference proteome</keyword>
<accession>A0JNH6</accession>
<reference key="1">
    <citation type="submission" date="2006-10" db="EMBL/GenBank/DDBJ databases">
        <authorList>
            <consortium name="NIH - Mammalian Gene Collection (MGC) project"/>
        </authorList>
    </citation>
    <scope>NUCLEOTIDE SEQUENCE [LARGE SCALE MRNA]</scope>
    <source>
        <strain>Hereford</strain>
        <tissue>Hypothalamus</tissue>
    </source>
</reference>
<feature type="chain" id="PRO_0000274399" description="Coiled-coil domain-containing protein 102A">
    <location>
        <begin position="1"/>
        <end position="555"/>
    </location>
</feature>
<feature type="region of interest" description="Disordered" evidence="3">
    <location>
        <begin position="1"/>
        <end position="68"/>
    </location>
</feature>
<feature type="region of interest" description="Disordered" evidence="3">
    <location>
        <begin position="136"/>
        <end position="202"/>
    </location>
</feature>
<feature type="region of interest" description="Disordered" evidence="3">
    <location>
        <begin position="214"/>
        <end position="254"/>
    </location>
</feature>
<feature type="region of interest" description="Disordered" evidence="3">
    <location>
        <begin position="478"/>
        <end position="555"/>
    </location>
</feature>
<feature type="coiled-coil region" evidence="2">
    <location>
        <begin position="72"/>
        <end position="161"/>
    </location>
</feature>
<feature type="coiled-coil region" evidence="2">
    <location>
        <begin position="268"/>
        <end position="401"/>
    </location>
</feature>
<feature type="coiled-coil region" evidence="2">
    <location>
        <begin position="432"/>
        <end position="522"/>
    </location>
</feature>
<feature type="compositionally biased region" description="Pro residues" evidence="3">
    <location>
        <begin position="37"/>
        <end position="61"/>
    </location>
</feature>
<feature type="compositionally biased region" description="Basic and acidic residues" evidence="3">
    <location>
        <begin position="136"/>
        <end position="159"/>
    </location>
</feature>
<feature type="compositionally biased region" description="Basic and acidic residues" evidence="3">
    <location>
        <begin position="166"/>
        <end position="183"/>
    </location>
</feature>
<feature type="compositionally biased region" description="Low complexity" evidence="3">
    <location>
        <begin position="224"/>
        <end position="236"/>
    </location>
</feature>
<feature type="compositionally biased region" description="Acidic residues" evidence="3">
    <location>
        <begin position="536"/>
        <end position="555"/>
    </location>
</feature>
<feature type="modified residue" description="Phosphoserine" evidence="1">
    <location>
        <position position="12"/>
    </location>
</feature>
<feature type="modified residue" description="Phosphoserine" evidence="1">
    <location>
        <position position="26"/>
    </location>
</feature>
<feature type="modified residue" description="Phosphoserine" evidence="1">
    <location>
        <position position="28"/>
    </location>
</feature>
<feature type="modified residue" description="Phosphoserine" evidence="1">
    <location>
        <position position="542"/>
    </location>
</feature>
<dbReference type="EMBL" id="BC126686">
    <property type="protein sequence ID" value="AAI26687.1"/>
    <property type="molecule type" value="mRNA"/>
</dbReference>
<dbReference type="RefSeq" id="NP_001071383.1">
    <property type="nucleotide sequence ID" value="NM_001077915.2"/>
</dbReference>
<dbReference type="RefSeq" id="XP_010812769.1">
    <property type="nucleotide sequence ID" value="XM_010814467.2"/>
</dbReference>
<dbReference type="RefSeq" id="XP_010812771.1">
    <property type="nucleotide sequence ID" value="XM_010814469.4"/>
</dbReference>
<dbReference type="RefSeq" id="XP_010812772.1">
    <property type="nucleotide sequence ID" value="XM_010814470.4"/>
</dbReference>
<dbReference type="SMR" id="A0JNH6"/>
<dbReference type="FunCoup" id="A0JNH6">
    <property type="interactions" value="698"/>
</dbReference>
<dbReference type="STRING" id="9913.ENSBTAP00000060766"/>
<dbReference type="PaxDb" id="9913-ENSBTAP00000000588"/>
<dbReference type="Ensembl" id="ENSBTAT00000000588.6">
    <property type="protein sequence ID" value="ENSBTAP00000000588.4"/>
    <property type="gene ID" value="ENSBTAG00000000462.6"/>
</dbReference>
<dbReference type="GeneID" id="513086"/>
<dbReference type="KEGG" id="bta:513086"/>
<dbReference type="CTD" id="92922"/>
<dbReference type="VEuPathDB" id="HostDB:ENSBTAG00000000462"/>
<dbReference type="VGNC" id="VGNC:26829">
    <property type="gene designation" value="CCDC102A"/>
</dbReference>
<dbReference type="eggNOG" id="ENOG502QSJ6">
    <property type="taxonomic scope" value="Eukaryota"/>
</dbReference>
<dbReference type="GeneTree" id="ENSGT00730000110960"/>
<dbReference type="HOGENOM" id="CLU_033486_1_0_1"/>
<dbReference type="InParanoid" id="A0JNH6"/>
<dbReference type="OMA" id="RSSHNGC"/>
<dbReference type="OrthoDB" id="5984396at2759"/>
<dbReference type="TreeFam" id="TF320856"/>
<dbReference type="Proteomes" id="UP000009136">
    <property type="component" value="Chromosome 18"/>
</dbReference>
<dbReference type="Bgee" id="ENSBTAG00000000462">
    <property type="expression patterns" value="Expressed in uterine cervix and 101 other cell types or tissues"/>
</dbReference>
<dbReference type="GO" id="GO:0016459">
    <property type="term" value="C:myosin complex"/>
    <property type="evidence" value="ECO:0007669"/>
    <property type="project" value="InterPro"/>
</dbReference>
<dbReference type="Gene3D" id="1.20.5.340">
    <property type="match status" value="1"/>
</dbReference>
<dbReference type="Gene3D" id="6.10.250.2420">
    <property type="match status" value="1"/>
</dbReference>
<dbReference type="InterPro" id="IPR002928">
    <property type="entry name" value="Myosin_tail"/>
</dbReference>
<dbReference type="PANTHER" id="PTHR46292">
    <property type="entry name" value="COILED-COIL DOMAIN-CONTAINING PROTEIN 102A"/>
    <property type="match status" value="1"/>
</dbReference>
<dbReference type="PANTHER" id="PTHR46292:SF3">
    <property type="entry name" value="COILED-COIL DOMAIN-CONTAINING PROTEIN 102A"/>
    <property type="match status" value="1"/>
</dbReference>
<dbReference type="Pfam" id="PF01576">
    <property type="entry name" value="Myosin_tail_1"/>
    <property type="match status" value="1"/>
</dbReference>
<dbReference type="SUPFAM" id="SSF90257">
    <property type="entry name" value="Myosin rod fragments"/>
    <property type="match status" value="1"/>
</dbReference>
<sequence>MSHGPSPRLAESPQLSKGSLLTILGSPSPERMGPADSLPPTPPSGTPSPGPPPALPLPPTPALLADGDWESREELRLRELEEARARAAQMEKTMRWWSDCTANWREKWSKVRAERNRAREEVRQLRQRLDALTKELAGARRERQEAQGESEARGRELARLRGARGGVDRTPDGPETEPEREQEPVPVRDVGSGCERPQGSQELELMESLLKNRPEEPEGCWEVRSAGAGAPRGSSGRQERGRLPWEDTTVEEDASKLTALRLRLDESQKVLLKEREDKMALSRNIEKLEGELSQWKIKYEELSKTKQEMLKQLSILKEAHQDELGRMSEDLEDELGARSSMDRKMAELRGEMERLQAENAAEWGRRERLETEKLGLERENKKLRAQVGDLEEALARRRRQTASALDCDLRASQAALFEKNKELADLKHVHGKLKKQFQEKVAELAHANRRVEQHEAEVKKLRLRVEELKKELAQAEDELDEAHNQARKLQRSLDEQTEQSENLQVQLEHVQSRLRRQQQNAPLFGKIRSARFGAEEAGDGASDLDEDEDLQIQVA</sequence>
<name>C102A_BOVIN</name>